<keyword id="KW-0456">Lyase</keyword>
<keyword id="KW-1185">Reference proteome</keyword>
<feature type="chain" id="PRO_0000063080" description="Putative pterin-4-alpha-carbinolamine dehydratase">
    <location>
        <begin position="1"/>
        <end position="108"/>
    </location>
</feature>
<proteinExistence type="inferred from homology"/>
<evidence type="ECO:0000255" key="1">
    <source>
        <dbReference type="HAMAP-Rule" id="MF_00434"/>
    </source>
</evidence>
<sequence length="108" mass="12240">MNLLELSCTPQHGQSPLADNTVKQLLSTLPDWEIVGIELRKTYRFANYHETMAFVNALAWIANQEDHHPDMSVHYNRAVVNFSTHDAGGLTLNDFICAAKTEALFRRP</sequence>
<protein>
    <recommendedName>
        <fullName evidence="1">Putative pterin-4-alpha-carbinolamine dehydratase</fullName>
        <shortName evidence="1">PHS</shortName>
        <ecNumber evidence="1">4.2.1.96</ecNumber>
    </recommendedName>
    <alternativeName>
        <fullName evidence="1">4-alpha-hydroxy-tetrahydropterin dehydratase</fullName>
    </alternativeName>
    <alternativeName>
        <fullName evidence="1">Pterin carbinolamine dehydratase</fullName>
        <shortName evidence="1">PCD</shortName>
    </alternativeName>
</protein>
<dbReference type="EC" id="4.2.1.96" evidence="1"/>
<dbReference type="EMBL" id="AE016825">
    <property type="protein sequence ID" value="AAQ60038.1"/>
    <property type="molecule type" value="Genomic_DNA"/>
</dbReference>
<dbReference type="RefSeq" id="WP_011135913.1">
    <property type="nucleotide sequence ID" value="NC_005085.1"/>
</dbReference>
<dbReference type="SMR" id="Q7NVH7"/>
<dbReference type="STRING" id="243365.CV_2366"/>
<dbReference type="GeneID" id="66368019"/>
<dbReference type="KEGG" id="cvi:CV_2366"/>
<dbReference type="eggNOG" id="COG2154">
    <property type="taxonomic scope" value="Bacteria"/>
</dbReference>
<dbReference type="HOGENOM" id="CLU_081974_2_1_4"/>
<dbReference type="OrthoDB" id="9794987at2"/>
<dbReference type="Proteomes" id="UP000001424">
    <property type="component" value="Chromosome"/>
</dbReference>
<dbReference type="GO" id="GO:0008124">
    <property type="term" value="F:4-alpha-hydroxytetrahydrobiopterin dehydratase activity"/>
    <property type="evidence" value="ECO:0007669"/>
    <property type="project" value="UniProtKB-UniRule"/>
</dbReference>
<dbReference type="GO" id="GO:0006729">
    <property type="term" value="P:tetrahydrobiopterin biosynthetic process"/>
    <property type="evidence" value="ECO:0007669"/>
    <property type="project" value="InterPro"/>
</dbReference>
<dbReference type="CDD" id="cd00913">
    <property type="entry name" value="PCD_DCoH_subfamily_a"/>
    <property type="match status" value="1"/>
</dbReference>
<dbReference type="Gene3D" id="3.30.1360.20">
    <property type="entry name" value="Transcriptional coactivator/pterin dehydratase"/>
    <property type="match status" value="1"/>
</dbReference>
<dbReference type="HAMAP" id="MF_00434">
    <property type="entry name" value="Pterin_4_alpha"/>
    <property type="match status" value="1"/>
</dbReference>
<dbReference type="InterPro" id="IPR036428">
    <property type="entry name" value="PCD_sf"/>
</dbReference>
<dbReference type="InterPro" id="IPR001533">
    <property type="entry name" value="Pterin_deHydtase"/>
</dbReference>
<dbReference type="NCBIfam" id="NF002017">
    <property type="entry name" value="PRK00823.1-2"/>
    <property type="match status" value="1"/>
</dbReference>
<dbReference type="NCBIfam" id="NF002019">
    <property type="entry name" value="PRK00823.1-4"/>
    <property type="match status" value="1"/>
</dbReference>
<dbReference type="PANTHER" id="PTHR12599">
    <property type="entry name" value="PTERIN-4-ALPHA-CARBINOLAMINE DEHYDRATASE"/>
    <property type="match status" value="1"/>
</dbReference>
<dbReference type="PANTHER" id="PTHR12599:SF0">
    <property type="entry name" value="PTERIN-4-ALPHA-CARBINOLAMINE DEHYDRATASE"/>
    <property type="match status" value="1"/>
</dbReference>
<dbReference type="Pfam" id="PF01329">
    <property type="entry name" value="Pterin_4a"/>
    <property type="match status" value="1"/>
</dbReference>
<dbReference type="SUPFAM" id="SSF55248">
    <property type="entry name" value="PCD-like"/>
    <property type="match status" value="1"/>
</dbReference>
<organism>
    <name type="scientific">Chromobacterium violaceum (strain ATCC 12472 / DSM 30191 / JCM 1249 / CCUG 213 / NBRC 12614 / NCIMB 9131 / NCTC 9757 / MK)</name>
    <dbReference type="NCBI Taxonomy" id="243365"/>
    <lineage>
        <taxon>Bacteria</taxon>
        <taxon>Pseudomonadati</taxon>
        <taxon>Pseudomonadota</taxon>
        <taxon>Betaproteobacteria</taxon>
        <taxon>Neisseriales</taxon>
        <taxon>Chromobacteriaceae</taxon>
        <taxon>Chromobacterium</taxon>
    </lineage>
</organism>
<name>PHS_CHRVO</name>
<gene>
    <name type="ordered locus">CV_2366</name>
</gene>
<reference key="1">
    <citation type="journal article" date="2003" name="Proc. Natl. Acad. Sci. U.S.A.">
        <title>The complete genome sequence of Chromobacterium violaceum reveals remarkable and exploitable bacterial adaptability.</title>
        <authorList>
            <person name="Vasconcelos A.T.R."/>
            <person name="de Almeida D.F."/>
            <person name="Hungria M."/>
            <person name="Guimaraes C.T."/>
            <person name="Antonio R.V."/>
            <person name="Almeida F.C."/>
            <person name="de Almeida L.G.P."/>
            <person name="de Almeida R."/>
            <person name="Alves-Gomes J.A."/>
            <person name="Andrade E.M."/>
            <person name="Araripe J."/>
            <person name="de Araujo M.F.F."/>
            <person name="Astolfi-Filho S."/>
            <person name="Azevedo V."/>
            <person name="Baptista A.J."/>
            <person name="Bataus L.A.M."/>
            <person name="Batista J.S."/>
            <person name="Belo A."/>
            <person name="van den Berg C."/>
            <person name="Bogo M."/>
            <person name="Bonatto S."/>
            <person name="Bordignon J."/>
            <person name="Brigido M.M."/>
            <person name="Brito C.A."/>
            <person name="Brocchi M."/>
            <person name="Burity H.A."/>
            <person name="Camargo A.A."/>
            <person name="Cardoso D.D.P."/>
            <person name="Carneiro N.P."/>
            <person name="Carraro D.M."/>
            <person name="Carvalho C.M.B."/>
            <person name="Cascardo J.C.M."/>
            <person name="Cavada B.S."/>
            <person name="Chueire L.M.O."/>
            <person name="Creczynski-Pasa T.B."/>
            <person name="Cunha-Junior N.C."/>
            <person name="Fagundes N."/>
            <person name="Falcao C.L."/>
            <person name="Fantinatti F."/>
            <person name="Farias I.P."/>
            <person name="Felipe M.S.S."/>
            <person name="Ferrari L.P."/>
            <person name="Ferro J.A."/>
            <person name="Ferro M.I.T."/>
            <person name="Franco G.R."/>
            <person name="Freitas N.S.A."/>
            <person name="Furlan L.R."/>
            <person name="Gazzinelli R.T."/>
            <person name="Gomes E.A."/>
            <person name="Goncalves P.R."/>
            <person name="Grangeiro T.B."/>
            <person name="Grattapaglia D."/>
            <person name="Grisard E.C."/>
            <person name="Hanna E.S."/>
            <person name="Jardim S.N."/>
            <person name="Laurino J."/>
            <person name="Leoi L.C.T."/>
            <person name="Lima L.F.A."/>
            <person name="Loureiro M.F."/>
            <person name="Lyra M.C.C.P."/>
            <person name="Madeira H.M.F."/>
            <person name="Manfio G.P."/>
            <person name="Maranhao A.Q."/>
            <person name="Martins W.S."/>
            <person name="di Mauro S.M.Z."/>
            <person name="de Medeiros S.R.B."/>
            <person name="Meissner R.V."/>
            <person name="Moreira M.A.M."/>
            <person name="Nascimento F.F."/>
            <person name="Nicolas M.F."/>
            <person name="Oliveira J.G."/>
            <person name="Oliveira S.C."/>
            <person name="Paixao R.F.C."/>
            <person name="Parente J.A."/>
            <person name="Pedrosa F.O."/>
            <person name="Pena S.D.J."/>
            <person name="Pereira J.O."/>
            <person name="Pereira M."/>
            <person name="Pinto L.S.R.C."/>
            <person name="Pinto L.S."/>
            <person name="Porto J.I.R."/>
            <person name="Potrich D.P."/>
            <person name="Ramalho-Neto C.E."/>
            <person name="Reis A.M.M."/>
            <person name="Rigo L.U."/>
            <person name="Rondinelli E."/>
            <person name="Santos E.B.P."/>
            <person name="Santos F.R."/>
            <person name="Schneider M.P.C."/>
            <person name="Seuanez H.N."/>
            <person name="Silva A.M.R."/>
            <person name="da Silva A.L.C."/>
            <person name="Silva D.W."/>
            <person name="Silva R."/>
            <person name="Simoes I.C."/>
            <person name="Simon D."/>
            <person name="Soares C.M.A."/>
            <person name="Soares R.B.A."/>
            <person name="Souza E.M."/>
            <person name="Souza K.R.L."/>
            <person name="Souza R.C."/>
            <person name="Steffens M.B.R."/>
            <person name="Steindel M."/>
            <person name="Teixeira S.R."/>
            <person name="Urmenyi T."/>
            <person name="Vettore A."/>
            <person name="Wassem R."/>
            <person name="Zaha A."/>
            <person name="Simpson A.J.G."/>
        </authorList>
    </citation>
    <scope>NUCLEOTIDE SEQUENCE [LARGE SCALE GENOMIC DNA]</scope>
    <source>
        <strain>ATCC 12472 / DSM 30191 / JCM 1249 / CCUG 213 / NBRC 12614 / NCIMB 9131 / NCTC 9757 / MK</strain>
    </source>
</reference>
<comment type="catalytic activity">
    <reaction evidence="1">
        <text>(4aS,6R)-4a-hydroxy-L-erythro-5,6,7,8-tetrahydrobiopterin = (6R)-L-erythro-6,7-dihydrobiopterin + H2O</text>
        <dbReference type="Rhea" id="RHEA:11920"/>
        <dbReference type="ChEBI" id="CHEBI:15377"/>
        <dbReference type="ChEBI" id="CHEBI:15642"/>
        <dbReference type="ChEBI" id="CHEBI:43120"/>
        <dbReference type="EC" id="4.2.1.96"/>
    </reaction>
</comment>
<comment type="similarity">
    <text evidence="1">Belongs to the pterin-4-alpha-carbinolamine dehydratase family.</text>
</comment>
<accession>Q7NVH7</accession>